<sequence>MSNIIKQIEQEQLKQNVPSFRPGDTLEVKVWVVEGSKRRLQAFEGVVIAIRHRGLHSAFTLRKISNGVGVERVFQTHSPIIDSITVKRKGAVRKAKLYYLRERSGKSARIKERLGN</sequence>
<name>RL19_HISS2</name>
<accession>B0UVM9</accession>
<proteinExistence type="inferred from homology"/>
<evidence type="ECO:0000255" key="1">
    <source>
        <dbReference type="HAMAP-Rule" id="MF_00402"/>
    </source>
</evidence>
<evidence type="ECO:0000305" key="2"/>
<reference key="1">
    <citation type="submission" date="2008-02" db="EMBL/GenBank/DDBJ databases">
        <title>Complete sequence of Haemophilus somnus 2336.</title>
        <authorList>
            <consortium name="US DOE Joint Genome Institute"/>
            <person name="Siddaramappa S."/>
            <person name="Duncan A.J."/>
            <person name="Challacombe J.F."/>
            <person name="Rainey D."/>
            <person name="Gillaspy A.F."/>
            <person name="Carson M."/>
            <person name="Gipson J."/>
            <person name="Gipson M."/>
            <person name="Bruce D."/>
            <person name="Detter J.C."/>
            <person name="Han C.S."/>
            <person name="Land M."/>
            <person name="Tapia R."/>
            <person name="Thompson L.S."/>
            <person name="Orvis J."/>
            <person name="Zaitshik J."/>
            <person name="Barnes G."/>
            <person name="Brettin T.S."/>
            <person name="Dyer D.W."/>
            <person name="Inzana T.J."/>
        </authorList>
    </citation>
    <scope>NUCLEOTIDE SEQUENCE [LARGE SCALE GENOMIC DNA]</scope>
    <source>
        <strain>2336</strain>
    </source>
</reference>
<organism>
    <name type="scientific">Histophilus somni (strain 2336)</name>
    <name type="common">Haemophilus somnus</name>
    <dbReference type="NCBI Taxonomy" id="228400"/>
    <lineage>
        <taxon>Bacteria</taxon>
        <taxon>Pseudomonadati</taxon>
        <taxon>Pseudomonadota</taxon>
        <taxon>Gammaproteobacteria</taxon>
        <taxon>Pasteurellales</taxon>
        <taxon>Pasteurellaceae</taxon>
        <taxon>Histophilus</taxon>
    </lineage>
</organism>
<dbReference type="EMBL" id="CP000947">
    <property type="protein sequence ID" value="ACA31451.1"/>
    <property type="molecule type" value="Genomic_DNA"/>
</dbReference>
<dbReference type="RefSeq" id="WP_011608450.1">
    <property type="nucleotide sequence ID" value="NC_010519.1"/>
</dbReference>
<dbReference type="SMR" id="B0UVM9"/>
<dbReference type="STRING" id="228400.HSM_0168"/>
<dbReference type="GeneID" id="31486446"/>
<dbReference type="KEGG" id="hsm:HSM_0168"/>
<dbReference type="HOGENOM" id="CLU_103507_2_2_6"/>
<dbReference type="GO" id="GO:0022625">
    <property type="term" value="C:cytosolic large ribosomal subunit"/>
    <property type="evidence" value="ECO:0007669"/>
    <property type="project" value="TreeGrafter"/>
</dbReference>
<dbReference type="GO" id="GO:0003735">
    <property type="term" value="F:structural constituent of ribosome"/>
    <property type="evidence" value="ECO:0007669"/>
    <property type="project" value="InterPro"/>
</dbReference>
<dbReference type="GO" id="GO:0006412">
    <property type="term" value="P:translation"/>
    <property type="evidence" value="ECO:0007669"/>
    <property type="project" value="UniProtKB-UniRule"/>
</dbReference>
<dbReference type="FunFam" id="2.30.30.790:FF:000001">
    <property type="entry name" value="50S ribosomal protein L19"/>
    <property type="match status" value="1"/>
</dbReference>
<dbReference type="Gene3D" id="2.30.30.790">
    <property type="match status" value="1"/>
</dbReference>
<dbReference type="HAMAP" id="MF_00402">
    <property type="entry name" value="Ribosomal_bL19"/>
    <property type="match status" value="1"/>
</dbReference>
<dbReference type="InterPro" id="IPR001857">
    <property type="entry name" value="Ribosomal_bL19"/>
</dbReference>
<dbReference type="InterPro" id="IPR018257">
    <property type="entry name" value="Ribosomal_bL19_CS"/>
</dbReference>
<dbReference type="InterPro" id="IPR038657">
    <property type="entry name" value="Ribosomal_bL19_sf"/>
</dbReference>
<dbReference type="InterPro" id="IPR008991">
    <property type="entry name" value="Translation_prot_SH3-like_sf"/>
</dbReference>
<dbReference type="NCBIfam" id="TIGR01024">
    <property type="entry name" value="rplS_bact"/>
    <property type="match status" value="1"/>
</dbReference>
<dbReference type="PANTHER" id="PTHR15680:SF9">
    <property type="entry name" value="LARGE RIBOSOMAL SUBUNIT PROTEIN BL19M"/>
    <property type="match status" value="1"/>
</dbReference>
<dbReference type="PANTHER" id="PTHR15680">
    <property type="entry name" value="RIBOSOMAL PROTEIN L19"/>
    <property type="match status" value="1"/>
</dbReference>
<dbReference type="Pfam" id="PF01245">
    <property type="entry name" value="Ribosomal_L19"/>
    <property type="match status" value="1"/>
</dbReference>
<dbReference type="PIRSF" id="PIRSF002191">
    <property type="entry name" value="Ribosomal_L19"/>
    <property type="match status" value="1"/>
</dbReference>
<dbReference type="PRINTS" id="PR00061">
    <property type="entry name" value="RIBOSOMALL19"/>
</dbReference>
<dbReference type="SUPFAM" id="SSF50104">
    <property type="entry name" value="Translation proteins SH3-like domain"/>
    <property type="match status" value="1"/>
</dbReference>
<dbReference type="PROSITE" id="PS01015">
    <property type="entry name" value="RIBOSOMAL_L19"/>
    <property type="match status" value="1"/>
</dbReference>
<keyword id="KW-0687">Ribonucleoprotein</keyword>
<keyword id="KW-0689">Ribosomal protein</keyword>
<feature type="chain" id="PRO_1000080355" description="Large ribosomal subunit protein bL19">
    <location>
        <begin position="1"/>
        <end position="116"/>
    </location>
</feature>
<protein>
    <recommendedName>
        <fullName evidence="1">Large ribosomal subunit protein bL19</fullName>
    </recommendedName>
    <alternativeName>
        <fullName evidence="2">50S ribosomal protein L19</fullName>
    </alternativeName>
</protein>
<gene>
    <name evidence="1" type="primary">rplS</name>
    <name type="ordered locus">HSM_0168</name>
</gene>
<comment type="function">
    <text evidence="1">This protein is located at the 30S-50S ribosomal subunit interface and may play a role in the structure and function of the aminoacyl-tRNA binding site.</text>
</comment>
<comment type="similarity">
    <text evidence="1">Belongs to the bacterial ribosomal protein bL19 family.</text>
</comment>